<gene>
    <name evidence="1" type="primary">pyrC</name>
    <name type="ordered locus">PEPE_0314</name>
</gene>
<organism>
    <name type="scientific">Pediococcus pentosaceus (strain ATCC 25745 / CCUG 21536 / LMG 10740 / 183-1w)</name>
    <dbReference type="NCBI Taxonomy" id="278197"/>
    <lineage>
        <taxon>Bacteria</taxon>
        <taxon>Bacillati</taxon>
        <taxon>Bacillota</taxon>
        <taxon>Bacilli</taxon>
        <taxon>Lactobacillales</taxon>
        <taxon>Lactobacillaceae</taxon>
        <taxon>Pediococcus</taxon>
    </lineage>
</organism>
<keyword id="KW-0378">Hydrolase</keyword>
<keyword id="KW-0479">Metal-binding</keyword>
<keyword id="KW-0665">Pyrimidine biosynthesis</keyword>
<keyword id="KW-0862">Zinc</keyword>
<feature type="chain" id="PRO_1000024094" description="Dihydroorotase">
    <location>
        <begin position="1"/>
        <end position="425"/>
    </location>
</feature>
<feature type="active site" evidence="1">
    <location>
        <position position="303"/>
    </location>
</feature>
<feature type="binding site" evidence="1">
    <location>
        <position position="58"/>
    </location>
    <ligand>
        <name>Zn(2+)</name>
        <dbReference type="ChEBI" id="CHEBI:29105"/>
        <label>1</label>
    </ligand>
</feature>
<feature type="binding site" evidence="1">
    <location>
        <begin position="60"/>
        <end position="62"/>
    </location>
    <ligand>
        <name>substrate</name>
    </ligand>
</feature>
<feature type="binding site" evidence="1">
    <location>
        <position position="60"/>
    </location>
    <ligand>
        <name>Zn(2+)</name>
        <dbReference type="ChEBI" id="CHEBI:29105"/>
        <label>1</label>
    </ligand>
</feature>
<feature type="binding site" evidence="1">
    <location>
        <position position="92"/>
    </location>
    <ligand>
        <name>substrate</name>
    </ligand>
</feature>
<feature type="binding site" evidence="1">
    <location>
        <position position="150"/>
    </location>
    <ligand>
        <name>Zn(2+)</name>
        <dbReference type="ChEBI" id="CHEBI:29105"/>
        <label>1</label>
    </ligand>
</feature>
<feature type="binding site" evidence="1">
    <location>
        <position position="150"/>
    </location>
    <ligand>
        <name>Zn(2+)</name>
        <dbReference type="ChEBI" id="CHEBI:29105"/>
        <label>2</label>
    </ligand>
</feature>
<feature type="binding site" evidence="1">
    <location>
        <position position="177"/>
    </location>
    <ligand>
        <name>Zn(2+)</name>
        <dbReference type="ChEBI" id="CHEBI:29105"/>
        <label>2</label>
    </ligand>
</feature>
<feature type="binding site" evidence="1">
    <location>
        <position position="230"/>
    </location>
    <ligand>
        <name>Zn(2+)</name>
        <dbReference type="ChEBI" id="CHEBI:29105"/>
        <label>2</label>
    </ligand>
</feature>
<feature type="binding site" evidence="1">
    <location>
        <position position="276"/>
    </location>
    <ligand>
        <name>substrate</name>
    </ligand>
</feature>
<feature type="binding site" evidence="1">
    <location>
        <position position="303"/>
    </location>
    <ligand>
        <name>Zn(2+)</name>
        <dbReference type="ChEBI" id="CHEBI:29105"/>
        <label>1</label>
    </ligand>
</feature>
<feature type="binding site" evidence="1">
    <location>
        <position position="307"/>
    </location>
    <ligand>
        <name>substrate</name>
    </ligand>
</feature>
<feature type="binding site" evidence="1">
    <location>
        <begin position="321"/>
        <end position="322"/>
    </location>
    <ligand>
        <name>substrate</name>
    </ligand>
</feature>
<sequence>MKVLLKNARVIKSHQVQKTDVLVENDRITQIQPEINVEAEQIIDVKNQLLMPGLVDIHVHFRDPGQTDKEDVVSGSAAAVKGGFTTVLTMPNVDPVPDTPEKMTAMVKHNQTAGSLHIGQYGSITKKRTSEELVDFKALKEAGAVAFSNDGNGIQTAETMYQAMLQIKEVGLPLAAHVEDESLMQHGVMNQGTVAEKLGLPGISELAETAQLARDLEIARNTGAHYHVCHVSKARSVELIRRAQRDGVHVTAEVAPHHLFLDETMISMDNPMMKMNPPLRTLEDRQALLGGLLDGTIGMIATDHAPHTVKDKAGSMKTASFGITGLETAFPLLYTKLVKPGLCTVEQLVEWMSIQPAEIFNLKAAGQLEVGDVADLTVMNVEDEYEIKEADFASKGINSPFIGQKVYGQTQLTMVAGKIVYQREG</sequence>
<dbReference type="EC" id="3.5.2.3" evidence="1"/>
<dbReference type="EMBL" id="CP000422">
    <property type="protein sequence ID" value="ABJ67410.1"/>
    <property type="molecule type" value="Genomic_DNA"/>
</dbReference>
<dbReference type="RefSeq" id="WP_011673000.1">
    <property type="nucleotide sequence ID" value="NC_008525.1"/>
</dbReference>
<dbReference type="SMR" id="Q03HB2"/>
<dbReference type="STRING" id="278197.PEPE_0314"/>
<dbReference type="GeneID" id="33062811"/>
<dbReference type="KEGG" id="ppe:PEPE_0314"/>
<dbReference type="eggNOG" id="COG0044">
    <property type="taxonomic scope" value="Bacteria"/>
</dbReference>
<dbReference type="HOGENOM" id="CLU_015572_1_0_9"/>
<dbReference type="OrthoDB" id="9765462at2"/>
<dbReference type="UniPathway" id="UPA00070">
    <property type="reaction ID" value="UER00117"/>
</dbReference>
<dbReference type="Proteomes" id="UP000000773">
    <property type="component" value="Chromosome"/>
</dbReference>
<dbReference type="GO" id="GO:0005737">
    <property type="term" value="C:cytoplasm"/>
    <property type="evidence" value="ECO:0007669"/>
    <property type="project" value="TreeGrafter"/>
</dbReference>
<dbReference type="GO" id="GO:0004038">
    <property type="term" value="F:allantoinase activity"/>
    <property type="evidence" value="ECO:0007669"/>
    <property type="project" value="TreeGrafter"/>
</dbReference>
<dbReference type="GO" id="GO:0004151">
    <property type="term" value="F:dihydroorotase activity"/>
    <property type="evidence" value="ECO:0007669"/>
    <property type="project" value="UniProtKB-UniRule"/>
</dbReference>
<dbReference type="GO" id="GO:0008270">
    <property type="term" value="F:zinc ion binding"/>
    <property type="evidence" value="ECO:0007669"/>
    <property type="project" value="UniProtKB-UniRule"/>
</dbReference>
<dbReference type="GO" id="GO:0044205">
    <property type="term" value="P:'de novo' UMP biosynthetic process"/>
    <property type="evidence" value="ECO:0007669"/>
    <property type="project" value="UniProtKB-UniRule"/>
</dbReference>
<dbReference type="GO" id="GO:0006145">
    <property type="term" value="P:purine nucleobase catabolic process"/>
    <property type="evidence" value="ECO:0007669"/>
    <property type="project" value="TreeGrafter"/>
</dbReference>
<dbReference type="CDD" id="cd01317">
    <property type="entry name" value="DHOase_IIa"/>
    <property type="match status" value="1"/>
</dbReference>
<dbReference type="Gene3D" id="3.20.20.140">
    <property type="entry name" value="Metal-dependent hydrolases"/>
    <property type="match status" value="1"/>
</dbReference>
<dbReference type="Gene3D" id="2.30.40.10">
    <property type="entry name" value="Urease, subunit C, domain 1"/>
    <property type="match status" value="1"/>
</dbReference>
<dbReference type="HAMAP" id="MF_00220_B">
    <property type="entry name" value="PyrC_classI_B"/>
    <property type="match status" value="1"/>
</dbReference>
<dbReference type="InterPro" id="IPR006680">
    <property type="entry name" value="Amidohydro-rel"/>
</dbReference>
<dbReference type="InterPro" id="IPR004722">
    <property type="entry name" value="DHOase"/>
</dbReference>
<dbReference type="InterPro" id="IPR050138">
    <property type="entry name" value="DHOase/Allantoinase_Hydrolase"/>
</dbReference>
<dbReference type="InterPro" id="IPR002195">
    <property type="entry name" value="Dihydroorotase_CS"/>
</dbReference>
<dbReference type="InterPro" id="IPR011059">
    <property type="entry name" value="Metal-dep_hydrolase_composite"/>
</dbReference>
<dbReference type="InterPro" id="IPR032466">
    <property type="entry name" value="Metal_Hydrolase"/>
</dbReference>
<dbReference type="NCBIfam" id="NF006837">
    <property type="entry name" value="PRK09357.1-2"/>
    <property type="match status" value="1"/>
</dbReference>
<dbReference type="NCBIfam" id="TIGR00857">
    <property type="entry name" value="pyrC_multi"/>
    <property type="match status" value="1"/>
</dbReference>
<dbReference type="PANTHER" id="PTHR43668">
    <property type="entry name" value="ALLANTOINASE"/>
    <property type="match status" value="1"/>
</dbReference>
<dbReference type="PANTHER" id="PTHR43668:SF2">
    <property type="entry name" value="ALLANTOINASE"/>
    <property type="match status" value="1"/>
</dbReference>
<dbReference type="Pfam" id="PF01979">
    <property type="entry name" value="Amidohydro_1"/>
    <property type="match status" value="1"/>
</dbReference>
<dbReference type="SUPFAM" id="SSF51338">
    <property type="entry name" value="Composite domain of metallo-dependent hydrolases"/>
    <property type="match status" value="1"/>
</dbReference>
<dbReference type="SUPFAM" id="SSF51556">
    <property type="entry name" value="Metallo-dependent hydrolases"/>
    <property type="match status" value="1"/>
</dbReference>
<dbReference type="PROSITE" id="PS00482">
    <property type="entry name" value="DIHYDROOROTASE_1"/>
    <property type="match status" value="1"/>
</dbReference>
<dbReference type="PROSITE" id="PS00483">
    <property type="entry name" value="DIHYDROOROTASE_2"/>
    <property type="match status" value="1"/>
</dbReference>
<comment type="function">
    <text evidence="1">Catalyzes the reversible cyclization of carbamoyl aspartate to dihydroorotate.</text>
</comment>
<comment type="catalytic activity">
    <reaction evidence="1">
        <text>(S)-dihydroorotate + H2O = N-carbamoyl-L-aspartate + H(+)</text>
        <dbReference type="Rhea" id="RHEA:24296"/>
        <dbReference type="ChEBI" id="CHEBI:15377"/>
        <dbReference type="ChEBI" id="CHEBI:15378"/>
        <dbReference type="ChEBI" id="CHEBI:30864"/>
        <dbReference type="ChEBI" id="CHEBI:32814"/>
        <dbReference type="EC" id="3.5.2.3"/>
    </reaction>
</comment>
<comment type="cofactor">
    <cofactor evidence="1">
        <name>Zn(2+)</name>
        <dbReference type="ChEBI" id="CHEBI:29105"/>
    </cofactor>
    <text evidence="1">Binds 2 Zn(2+) ions per subunit.</text>
</comment>
<comment type="pathway">
    <text evidence="1">Pyrimidine metabolism; UMP biosynthesis via de novo pathway; (S)-dihydroorotate from bicarbonate: step 3/3.</text>
</comment>
<comment type="similarity">
    <text evidence="1">Belongs to the metallo-dependent hydrolases superfamily. DHOase family. Class I DHOase subfamily.</text>
</comment>
<proteinExistence type="inferred from homology"/>
<reference key="1">
    <citation type="journal article" date="2006" name="Proc. Natl. Acad. Sci. U.S.A.">
        <title>Comparative genomics of the lactic acid bacteria.</title>
        <authorList>
            <person name="Makarova K.S."/>
            <person name="Slesarev A."/>
            <person name="Wolf Y.I."/>
            <person name="Sorokin A."/>
            <person name="Mirkin B."/>
            <person name="Koonin E.V."/>
            <person name="Pavlov A."/>
            <person name="Pavlova N."/>
            <person name="Karamychev V."/>
            <person name="Polouchine N."/>
            <person name="Shakhova V."/>
            <person name="Grigoriev I."/>
            <person name="Lou Y."/>
            <person name="Rohksar D."/>
            <person name="Lucas S."/>
            <person name="Huang K."/>
            <person name="Goodstein D.M."/>
            <person name="Hawkins T."/>
            <person name="Plengvidhya V."/>
            <person name="Welker D."/>
            <person name="Hughes J."/>
            <person name="Goh Y."/>
            <person name="Benson A."/>
            <person name="Baldwin K."/>
            <person name="Lee J.-H."/>
            <person name="Diaz-Muniz I."/>
            <person name="Dosti B."/>
            <person name="Smeianov V."/>
            <person name="Wechter W."/>
            <person name="Barabote R."/>
            <person name="Lorca G."/>
            <person name="Altermann E."/>
            <person name="Barrangou R."/>
            <person name="Ganesan B."/>
            <person name="Xie Y."/>
            <person name="Rawsthorne H."/>
            <person name="Tamir D."/>
            <person name="Parker C."/>
            <person name="Breidt F."/>
            <person name="Broadbent J.R."/>
            <person name="Hutkins R."/>
            <person name="O'Sullivan D."/>
            <person name="Steele J."/>
            <person name="Unlu G."/>
            <person name="Saier M.H. Jr."/>
            <person name="Klaenhammer T."/>
            <person name="Richardson P."/>
            <person name="Kozyavkin S."/>
            <person name="Weimer B.C."/>
            <person name="Mills D.A."/>
        </authorList>
    </citation>
    <scope>NUCLEOTIDE SEQUENCE [LARGE SCALE GENOMIC DNA]</scope>
    <source>
        <strain>ATCC 25745 / CCUG 21536 / LMG 10740 / 183-1w</strain>
    </source>
</reference>
<accession>Q03HB2</accession>
<protein>
    <recommendedName>
        <fullName evidence="1">Dihydroorotase</fullName>
        <shortName evidence="1">DHOase</shortName>
        <ecNumber evidence="1">3.5.2.3</ecNumber>
    </recommendedName>
</protein>
<evidence type="ECO:0000255" key="1">
    <source>
        <dbReference type="HAMAP-Rule" id="MF_00220"/>
    </source>
</evidence>
<name>PYRC_PEDPA</name>